<feature type="chain" id="PRO_0000074783" description="Autoinducer 2 sensor kinase/phosphatase LuxQ">
    <location>
        <begin position="1"/>
        <end position="859"/>
    </location>
</feature>
<feature type="transmembrane region" description="Helical" evidence="1">
    <location>
        <begin position="15"/>
        <end position="35"/>
    </location>
</feature>
<feature type="transmembrane region" description="Helical" evidence="1">
    <location>
        <begin position="280"/>
        <end position="300"/>
    </location>
</feature>
<feature type="domain" description="Histidine kinase" evidence="2">
    <location>
        <begin position="489"/>
        <end position="711"/>
    </location>
</feature>
<feature type="domain" description="Response regulatory" evidence="3">
    <location>
        <begin position="736"/>
        <end position="851"/>
    </location>
</feature>
<feature type="modified residue" description="Phosphohistidine; by autocatalysis" evidence="2">
    <location>
        <position position="492"/>
    </location>
</feature>
<feature type="modified residue" description="4-aspartylphosphate" evidence="3">
    <location>
        <position position="785"/>
    </location>
</feature>
<feature type="helix" evidence="5">
    <location>
        <begin position="53"/>
        <end position="78"/>
    </location>
</feature>
<feature type="helix" evidence="5">
    <location>
        <begin position="82"/>
        <end position="90"/>
    </location>
</feature>
<feature type="helix" evidence="5">
    <location>
        <begin position="93"/>
        <end position="106"/>
    </location>
</feature>
<feature type="helix" evidence="5">
    <location>
        <begin position="108"/>
        <end position="110"/>
    </location>
</feature>
<feature type="strand" evidence="5">
    <location>
        <begin position="113"/>
        <end position="118"/>
    </location>
</feature>
<feature type="strand" evidence="5">
    <location>
        <begin position="120"/>
        <end position="126"/>
    </location>
</feature>
<feature type="helix" evidence="5">
    <location>
        <begin position="129"/>
        <end position="133"/>
    </location>
</feature>
<feature type="helix" evidence="5">
    <location>
        <begin position="137"/>
        <end position="146"/>
    </location>
</feature>
<feature type="strand" evidence="5">
    <location>
        <begin position="149"/>
        <end position="152"/>
    </location>
</feature>
<feature type="strand" evidence="5">
    <location>
        <begin position="154"/>
        <end position="160"/>
    </location>
</feature>
<feature type="strand" evidence="5">
    <location>
        <begin position="163"/>
        <end position="175"/>
    </location>
</feature>
<feature type="turn" evidence="5">
    <location>
        <begin position="177"/>
        <end position="179"/>
    </location>
</feature>
<feature type="strand" evidence="5">
    <location>
        <begin position="182"/>
        <end position="191"/>
    </location>
</feature>
<feature type="helix" evidence="5">
    <location>
        <begin position="196"/>
        <end position="205"/>
    </location>
</feature>
<feature type="strand" evidence="5">
    <location>
        <begin position="209"/>
        <end position="215"/>
    </location>
</feature>
<feature type="strand" evidence="5">
    <location>
        <begin position="218"/>
        <end position="222"/>
    </location>
</feature>
<feature type="helix" evidence="5">
    <location>
        <begin position="232"/>
        <end position="236"/>
    </location>
</feature>
<feature type="strand" evidence="5">
    <location>
        <begin position="249"/>
        <end position="257"/>
    </location>
</feature>
<feature type="strand" evidence="5">
    <location>
        <begin position="260"/>
        <end position="270"/>
    </location>
</feature>
<accession>P54302</accession>
<organism>
    <name type="scientific">Vibrio harveyi</name>
    <name type="common">Beneckea harveyi</name>
    <dbReference type="NCBI Taxonomy" id="669"/>
    <lineage>
        <taxon>Bacteria</taxon>
        <taxon>Pseudomonadati</taxon>
        <taxon>Pseudomonadota</taxon>
        <taxon>Gammaproteobacteria</taxon>
        <taxon>Vibrionales</taxon>
        <taxon>Vibrionaceae</taxon>
        <taxon>Vibrio</taxon>
    </lineage>
</organism>
<gene>
    <name type="primary">luxQ</name>
</gene>
<reference key="1">
    <citation type="journal article" date="1994" name="Mol. Microbiol.">
        <title>Multiple signalling systems controlling expression of luminescence in Vibrio harveyi: sequence and function of genes encoding a second sensory pathway.</title>
        <authorList>
            <person name="Bassler B.L."/>
            <person name="Wright M."/>
            <person name="Silverman M.R."/>
        </authorList>
    </citation>
    <scope>NUCLEOTIDE SEQUENCE [GENOMIC DNA]</scope>
    <source>
        <strain>BB7</strain>
    </source>
</reference>
<dbReference type="EC" id="2.7.13.3"/>
<dbReference type="EC" id="3.1.3.-"/>
<dbReference type="EMBL" id="U07069">
    <property type="protein sequence ID" value="AAA20838.1"/>
    <property type="molecule type" value="Genomic_DNA"/>
</dbReference>
<dbReference type="PIR" id="S49046">
    <property type="entry name" value="S49046"/>
</dbReference>
<dbReference type="PDB" id="1ZHH">
    <property type="method" value="X-ray"/>
    <property type="resolution" value="1.94 A"/>
    <property type="chains" value="B=39-278"/>
</dbReference>
<dbReference type="PDB" id="2HJ9">
    <property type="method" value="X-ray"/>
    <property type="resolution" value="2.34 A"/>
    <property type="chains" value="C/D=53-271"/>
</dbReference>
<dbReference type="PDB" id="2HJE">
    <property type="method" value="X-ray"/>
    <property type="resolution" value="1.70 A"/>
    <property type="chains" value="A=53-271"/>
</dbReference>
<dbReference type="PDBsum" id="1ZHH"/>
<dbReference type="PDBsum" id="2HJ9"/>
<dbReference type="PDBsum" id="2HJE"/>
<dbReference type="SMR" id="P54302"/>
<dbReference type="IntAct" id="P54302">
    <property type="interactions" value="1"/>
</dbReference>
<dbReference type="STRING" id="669.AL538_22575"/>
<dbReference type="BindingDB" id="P54302"/>
<dbReference type="ChEMBL" id="CHEMBL5291976"/>
<dbReference type="BRENDA" id="2.7.13.3">
    <property type="organism ID" value="6632"/>
</dbReference>
<dbReference type="EvolutionaryTrace" id="P54302"/>
<dbReference type="GO" id="GO:0005886">
    <property type="term" value="C:plasma membrane"/>
    <property type="evidence" value="ECO:0007669"/>
    <property type="project" value="UniProtKB-SubCell"/>
</dbReference>
<dbReference type="GO" id="GO:0005524">
    <property type="term" value="F:ATP binding"/>
    <property type="evidence" value="ECO:0007669"/>
    <property type="project" value="UniProtKB-KW"/>
</dbReference>
<dbReference type="GO" id="GO:0009927">
    <property type="term" value="F:histidine phosphotransfer kinase activity"/>
    <property type="evidence" value="ECO:0007669"/>
    <property type="project" value="TreeGrafter"/>
</dbReference>
<dbReference type="GO" id="GO:0004721">
    <property type="term" value="F:phosphoprotein phosphatase activity"/>
    <property type="evidence" value="ECO:0007669"/>
    <property type="project" value="UniProtKB-KW"/>
</dbReference>
<dbReference type="GO" id="GO:0000155">
    <property type="term" value="F:phosphorelay sensor kinase activity"/>
    <property type="evidence" value="ECO:0007669"/>
    <property type="project" value="InterPro"/>
</dbReference>
<dbReference type="CDD" id="cd16922">
    <property type="entry name" value="HATPase_EvgS-ArcB-TorS-like"/>
    <property type="match status" value="1"/>
</dbReference>
<dbReference type="CDD" id="cd00082">
    <property type="entry name" value="HisKA"/>
    <property type="match status" value="1"/>
</dbReference>
<dbReference type="CDD" id="cd17546">
    <property type="entry name" value="REC_hyHK_CKI1_RcsC-like"/>
    <property type="match status" value="1"/>
</dbReference>
<dbReference type="FunFam" id="1.10.287.130:FF:000091">
    <property type="entry name" value="Autoinducer 2 sensor kinase/phosphatase LuxQ"/>
    <property type="match status" value="1"/>
</dbReference>
<dbReference type="FunFam" id="3.40.50.2300:FF:000322">
    <property type="entry name" value="Autoinducer 2 sensor kinase/phosphatase luxQ"/>
    <property type="match status" value="1"/>
</dbReference>
<dbReference type="FunFam" id="3.30.450.20:FF:000151">
    <property type="entry name" value="Sensor histidine kinase LuxQ"/>
    <property type="match status" value="1"/>
</dbReference>
<dbReference type="FunFam" id="3.30.565.10:FF:000010">
    <property type="entry name" value="Sensor histidine kinase RcsC"/>
    <property type="match status" value="1"/>
</dbReference>
<dbReference type="Gene3D" id="1.10.287.130">
    <property type="match status" value="1"/>
</dbReference>
<dbReference type="Gene3D" id="3.40.50.2300">
    <property type="match status" value="1"/>
</dbReference>
<dbReference type="Gene3D" id="3.30.565.10">
    <property type="entry name" value="Histidine kinase-like ATPase, C-terminal domain"/>
    <property type="match status" value="1"/>
</dbReference>
<dbReference type="Gene3D" id="2.20.20.100">
    <property type="entry name" value="LuxQ periplasmic domain, C-terminal subdomain"/>
    <property type="match status" value="1"/>
</dbReference>
<dbReference type="Gene3D" id="3.30.450.220">
    <property type="entry name" value="LuxQ periplasmic domain, N-terminal subdomain"/>
    <property type="match status" value="1"/>
</dbReference>
<dbReference type="Gene3D" id="3.30.450.20">
    <property type="entry name" value="PAS domain"/>
    <property type="match status" value="1"/>
</dbReference>
<dbReference type="InterPro" id="IPR053413">
    <property type="entry name" value="AI-2_sensor_kinase/phosphatase"/>
</dbReference>
<dbReference type="InterPro" id="IPR011006">
    <property type="entry name" value="CheY-like_superfamily"/>
</dbReference>
<dbReference type="InterPro" id="IPR036890">
    <property type="entry name" value="HATPase_C_sf"/>
</dbReference>
<dbReference type="InterPro" id="IPR005467">
    <property type="entry name" value="His_kinase_dom"/>
</dbReference>
<dbReference type="InterPro" id="IPR003661">
    <property type="entry name" value="HisK_dim/P_dom"/>
</dbReference>
<dbReference type="InterPro" id="IPR036097">
    <property type="entry name" value="HisK_dim/P_sf"/>
</dbReference>
<dbReference type="InterPro" id="IPR015387">
    <property type="entry name" value="LuxQ-periplasm_dom"/>
</dbReference>
<dbReference type="InterPro" id="IPR043056">
    <property type="entry name" value="LuxQ-periplasm_N"/>
</dbReference>
<dbReference type="InterPro" id="IPR029151">
    <property type="entry name" value="Sensor-like_sf"/>
</dbReference>
<dbReference type="InterPro" id="IPR004358">
    <property type="entry name" value="Sig_transdc_His_kin-like_C"/>
</dbReference>
<dbReference type="InterPro" id="IPR001789">
    <property type="entry name" value="Sig_transdc_resp-reg_receiver"/>
</dbReference>
<dbReference type="NCBIfam" id="NF041947">
    <property type="entry name" value="LuxQ_Vibrio"/>
    <property type="match status" value="1"/>
</dbReference>
<dbReference type="PANTHER" id="PTHR43047:SF72">
    <property type="entry name" value="OSMOSENSING HISTIDINE PROTEIN KINASE SLN1"/>
    <property type="match status" value="1"/>
</dbReference>
<dbReference type="PANTHER" id="PTHR43047">
    <property type="entry name" value="TWO-COMPONENT HISTIDINE PROTEIN KINASE"/>
    <property type="match status" value="1"/>
</dbReference>
<dbReference type="Pfam" id="PF02518">
    <property type="entry name" value="HATPase_c"/>
    <property type="match status" value="1"/>
</dbReference>
<dbReference type="Pfam" id="PF00512">
    <property type="entry name" value="HisKA"/>
    <property type="match status" value="1"/>
</dbReference>
<dbReference type="Pfam" id="PF09308">
    <property type="entry name" value="LuxQ-periplasm"/>
    <property type="match status" value="1"/>
</dbReference>
<dbReference type="Pfam" id="PF00072">
    <property type="entry name" value="Response_reg"/>
    <property type="match status" value="1"/>
</dbReference>
<dbReference type="PRINTS" id="PR00344">
    <property type="entry name" value="BCTRLSENSOR"/>
</dbReference>
<dbReference type="SMART" id="SM00387">
    <property type="entry name" value="HATPase_c"/>
    <property type="match status" value="1"/>
</dbReference>
<dbReference type="SMART" id="SM00388">
    <property type="entry name" value="HisKA"/>
    <property type="match status" value="1"/>
</dbReference>
<dbReference type="SMART" id="SM00448">
    <property type="entry name" value="REC"/>
    <property type="match status" value="1"/>
</dbReference>
<dbReference type="SUPFAM" id="SSF55874">
    <property type="entry name" value="ATPase domain of HSP90 chaperone/DNA topoisomerase II/histidine kinase"/>
    <property type="match status" value="1"/>
</dbReference>
<dbReference type="SUPFAM" id="SSF52172">
    <property type="entry name" value="CheY-like"/>
    <property type="match status" value="1"/>
</dbReference>
<dbReference type="SUPFAM" id="SSF47384">
    <property type="entry name" value="Homodimeric domain of signal transducing histidine kinase"/>
    <property type="match status" value="1"/>
</dbReference>
<dbReference type="SUPFAM" id="SSF103190">
    <property type="entry name" value="Sensory domain-like"/>
    <property type="match status" value="1"/>
</dbReference>
<dbReference type="PROSITE" id="PS50109">
    <property type="entry name" value="HIS_KIN"/>
    <property type="match status" value="1"/>
</dbReference>
<dbReference type="PROSITE" id="PS50110">
    <property type="entry name" value="RESPONSE_REGULATORY"/>
    <property type="match status" value="1"/>
</dbReference>
<sequence>MTTTRSNIKKRRSLATLITKIIILVLAPIILGIFIQSYYFSKQIIWQEVDRTKQQTSALIHNIFDSHFAAIQIHHDSNSKSEVIRDFYTDRDTDVLNFFFLSIDQSDPSHTPEFRFLTDHKGIIWDDGNAHFYGVNDLILDSLANRVSFSNNWYYINVMTSIGSRHMLVRRVPILDPSTGEVLGFSFNAVVLDNNFALMEKLKSESNVDNVVLVANSVPLANSLIGDEPYNVADVLQRKSSDKRLDKLLVIETPIVVNAVTTELCLLTVQDNQSVVTLQIQHILAMLASIIGMIMIALMSREWIESKVSAQLESLMSYTRSAREEKGFERFGGSDIEEFDHIGSTLESTFEELEAQKKSFRDLFNFALSPIMVWSEESVLIQMNPAARKELVIEDDHEIMHPVFQGFKEKLTPHLKMAAQGATLTGVNVPIGNKIYRWNLSPIRVDGDISGIIVQGQDITTLIEAEKQSNIARREAEKSAQARADFLAKMSHEIRTPINGILGVAQLLKDSVDTQEQKNQIDVLCHSGEHLLAVLNDILDFSKIEQGKFNIQKHPFSFTDTMRTLENIYRPICTNKGVELVIENELDPNVEIFTDQVRLNQILFNLVSNAVKFTPIGSIRLHAELEQFYGAENSVLVVELTDTGIGIESDKLDQMFEPFVQEESTTTREYGGSGLGLTIVKNLVDMLEGDVQVRSSKGGGTTFVITLPVKDRERVLRPLEVSQRIKPEALFDESLKVLLVEDNHTNAFILQAFCKKYKMQVDWAKDGLDAMELLSDTTYDLILMDNQLPHLGGIETTHEIRQNLRLGTPIYACTADTAKETSDAFMAAGANYVMLKPIKENALHEAFVDFKQRFLVERT</sequence>
<name>LUXQ_VIBHA</name>
<evidence type="ECO:0000255" key="1"/>
<evidence type="ECO:0000255" key="2">
    <source>
        <dbReference type="PROSITE-ProRule" id="PRU00107"/>
    </source>
</evidence>
<evidence type="ECO:0000255" key="3">
    <source>
        <dbReference type="PROSITE-ProRule" id="PRU00169"/>
    </source>
</evidence>
<evidence type="ECO:0000305" key="4"/>
<evidence type="ECO:0007829" key="5">
    <source>
        <dbReference type="PDB" id="2HJE"/>
    </source>
</evidence>
<keyword id="KW-0002">3D-structure</keyword>
<keyword id="KW-0067">ATP-binding</keyword>
<keyword id="KW-0997">Cell inner membrane</keyword>
<keyword id="KW-1003">Cell membrane</keyword>
<keyword id="KW-0378">Hydrolase</keyword>
<keyword id="KW-0418">Kinase</keyword>
<keyword id="KW-0472">Membrane</keyword>
<keyword id="KW-0547">Nucleotide-binding</keyword>
<keyword id="KW-0597">Phosphoprotein</keyword>
<keyword id="KW-0904">Protein phosphatase</keyword>
<keyword id="KW-0808">Transferase</keyword>
<keyword id="KW-0812">Transmembrane</keyword>
<keyword id="KW-1133">Transmembrane helix</keyword>
<keyword id="KW-0902">Two-component regulatory system</keyword>
<proteinExistence type="evidence at protein level"/>
<protein>
    <recommendedName>
        <fullName>Autoinducer 2 sensor kinase/phosphatase LuxQ</fullName>
        <ecNumber>2.7.13.3</ecNumber>
        <ecNumber>3.1.3.-</ecNumber>
    </recommendedName>
</protein>
<comment type="function">
    <text>At low cell density, in absence of AI-2 (autoinducer 2), LuxQ has a kinase activity and autophosphorylates on a histidine residue. The phosphoryl group is then transferred to an aspartate residue in the response regulator domain. The phosphoryl group is transferred to LuxU, and ultimately to LuxO. At high cell density, in the presence of AI-2, the kinase activity is inactivated, and the response regulator domain has a phosphatase activity.</text>
</comment>
<comment type="catalytic activity">
    <reaction>
        <text>ATP + protein L-histidine = ADP + protein N-phospho-L-histidine.</text>
        <dbReference type="EC" id="2.7.13.3"/>
    </reaction>
</comment>
<comment type="subunit">
    <text>Binds the complex formed by AI-2 and LuxP.</text>
</comment>
<comment type="interaction">
    <interactant intactId="EBI-1101486">
        <id>P54302</id>
    </interactant>
    <interactant intactId="EBI-1101482">
        <id>P54300</id>
        <label>luxP</label>
    </interactant>
    <organismsDiffer>false</organismsDiffer>
    <experiments>5</experiments>
</comment>
<comment type="subcellular location">
    <subcellularLocation>
        <location evidence="4">Cell inner membrane</location>
        <topology evidence="4">Multi-pass membrane protein</topology>
    </subcellularLocation>
</comment>